<evidence type="ECO:0000250" key="1"/>
<evidence type="ECO:0000255" key="2">
    <source>
        <dbReference type="PROSITE-ProRule" id="PRU00267"/>
    </source>
</evidence>
<evidence type="ECO:0000256" key="3">
    <source>
        <dbReference type="SAM" id="MobiDB-lite"/>
    </source>
</evidence>
<evidence type="ECO:0000305" key="4"/>
<evidence type="ECO:0000312" key="5">
    <source>
        <dbReference type="EMBL" id="EEE54009.1"/>
    </source>
</evidence>
<reference key="1">
    <citation type="submission" date="2002-04" db="EMBL/GenBank/DDBJ databases">
        <title>Identification of early drought-induced cDNAs in rice.</title>
        <authorList>
            <person name="Klueva N."/>
            <person name="Tyagi A."/>
            <person name="Zhang J."/>
            <person name="Zheng H."/>
            <person name="Nguyen H."/>
        </authorList>
    </citation>
    <scope>NUCLEOTIDE SEQUENCE [MRNA]</scope>
</reference>
<reference key="2">
    <citation type="journal article" date="2002" name="Nature">
        <title>The genome sequence and structure of rice chromosome 1.</title>
        <authorList>
            <person name="Sasaki T."/>
            <person name="Matsumoto T."/>
            <person name="Yamamoto K."/>
            <person name="Sakata K."/>
            <person name="Baba T."/>
            <person name="Katayose Y."/>
            <person name="Wu J."/>
            <person name="Niimura Y."/>
            <person name="Cheng Z."/>
            <person name="Nagamura Y."/>
            <person name="Antonio B.A."/>
            <person name="Kanamori H."/>
            <person name="Hosokawa S."/>
            <person name="Masukawa M."/>
            <person name="Arikawa K."/>
            <person name="Chiden Y."/>
            <person name="Hayashi M."/>
            <person name="Okamoto M."/>
            <person name="Ando T."/>
            <person name="Aoki H."/>
            <person name="Arita K."/>
            <person name="Hamada M."/>
            <person name="Harada C."/>
            <person name="Hijishita S."/>
            <person name="Honda M."/>
            <person name="Ichikawa Y."/>
            <person name="Idonuma A."/>
            <person name="Iijima M."/>
            <person name="Ikeda M."/>
            <person name="Ikeno M."/>
            <person name="Ito S."/>
            <person name="Ito T."/>
            <person name="Ito Y."/>
            <person name="Ito Y."/>
            <person name="Iwabuchi A."/>
            <person name="Kamiya K."/>
            <person name="Karasawa W."/>
            <person name="Katagiri S."/>
            <person name="Kikuta A."/>
            <person name="Kobayashi N."/>
            <person name="Kono I."/>
            <person name="Machita K."/>
            <person name="Maehara T."/>
            <person name="Mizuno H."/>
            <person name="Mizubayashi T."/>
            <person name="Mukai Y."/>
            <person name="Nagasaki H."/>
            <person name="Nakashima M."/>
            <person name="Nakama Y."/>
            <person name="Nakamichi Y."/>
            <person name="Nakamura M."/>
            <person name="Namiki N."/>
            <person name="Negishi M."/>
            <person name="Ohta I."/>
            <person name="Ono N."/>
            <person name="Saji S."/>
            <person name="Sakai K."/>
            <person name="Shibata M."/>
            <person name="Shimokawa T."/>
            <person name="Shomura A."/>
            <person name="Song J."/>
            <person name="Takazaki Y."/>
            <person name="Terasawa K."/>
            <person name="Tsuji K."/>
            <person name="Waki K."/>
            <person name="Yamagata H."/>
            <person name="Yamane H."/>
            <person name="Yoshiki S."/>
            <person name="Yoshihara R."/>
            <person name="Yukawa K."/>
            <person name="Zhong H."/>
            <person name="Iwama H."/>
            <person name="Endo T."/>
            <person name="Ito H."/>
            <person name="Hahn J.H."/>
            <person name="Kim H.-I."/>
            <person name="Eun M.-Y."/>
            <person name="Yano M."/>
            <person name="Jiang J."/>
            <person name="Gojobori T."/>
        </authorList>
    </citation>
    <scope>NUCLEOTIDE SEQUENCE [LARGE SCALE GENOMIC DNA]</scope>
    <source>
        <strain>cv. Nipponbare</strain>
    </source>
</reference>
<reference key="3">
    <citation type="journal article" date="2005" name="Nature">
        <title>The map-based sequence of the rice genome.</title>
        <authorList>
            <consortium name="International rice genome sequencing project (IRGSP)"/>
        </authorList>
    </citation>
    <scope>NUCLEOTIDE SEQUENCE [LARGE SCALE GENOMIC DNA]</scope>
    <source>
        <strain>cv. Nipponbare</strain>
    </source>
</reference>
<reference key="4">
    <citation type="journal article" date="2008" name="Nucleic Acids Res.">
        <title>The rice annotation project database (RAP-DB): 2008 update.</title>
        <authorList>
            <consortium name="The rice annotation project (RAP)"/>
        </authorList>
    </citation>
    <scope>GENOME REANNOTATION</scope>
    <source>
        <strain>cv. Nipponbare</strain>
    </source>
</reference>
<reference key="5">
    <citation type="journal article" date="2013" name="Rice">
        <title>Improvement of the Oryza sativa Nipponbare reference genome using next generation sequence and optical map data.</title>
        <authorList>
            <person name="Kawahara Y."/>
            <person name="de la Bastide M."/>
            <person name="Hamilton J.P."/>
            <person name="Kanamori H."/>
            <person name="McCombie W.R."/>
            <person name="Ouyang S."/>
            <person name="Schwartz D.C."/>
            <person name="Tanaka T."/>
            <person name="Wu J."/>
            <person name="Zhou S."/>
            <person name="Childs K.L."/>
            <person name="Davidson R.M."/>
            <person name="Lin H."/>
            <person name="Quesada-Ocampo L."/>
            <person name="Vaillancourt B."/>
            <person name="Sakai H."/>
            <person name="Lee S.S."/>
            <person name="Kim J."/>
            <person name="Numa H."/>
            <person name="Itoh T."/>
            <person name="Buell C.R."/>
            <person name="Matsumoto T."/>
        </authorList>
    </citation>
    <scope>GENOME REANNOTATION</scope>
    <source>
        <strain>cv. Nipponbare</strain>
    </source>
</reference>
<reference key="6">
    <citation type="journal article" date="2005" name="PLoS Biol.">
        <title>The genomes of Oryza sativa: a history of duplications.</title>
        <authorList>
            <person name="Yu J."/>
            <person name="Wang J."/>
            <person name="Lin W."/>
            <person name="Li S."/>
            <person name="Li H."/>
            <person name="Zhou J."/>
            <person name="Ni P."/>
            <person name="Dong W."/>
            <person name="Hu S."/>
            <person name="Zeng C."/>
            <person name="Zhang J."/>
            <person name="Zhang Y."/>
            <person name="Li R."/>
            <person name="Xu Z."/>
            <person name="Li S."/>
            <person name="Li X."/>
            <person name="Zheng H."/>
            <person name="Cong L."/>
            <person name="Lin L."/>
            <person name="Yin J."/>
            <person name="Geng J."/>
            <person name="Li G."/>
            <person name="Shi J."/>
            <person name="Liu J."/>
            <person name="Lv H."/>
            <person name="Li J."/>
            <person name="Wang J."/>
            <person name="Deng Y."/>
            <person name="Ran L."/>
            <person name="Shi X."/>
            <person name="Wang X."/>
            <person name="Wu Q."/>
            <person name="Li C."/>
            <person name="Ren X."/>
            <person name="Wang J."/>
            <person name="Wang X."/>
            <person name="Li D."/>
            <person name="Liu D."/>
            <person name="Zhang X."/>
            <person name="Ji Z."/>
            <person name="Zhao W."/>
            <person name="Sun Y."/>
            <person name="Zhang Z."/>
            <person name="Bao J."/>
            <person name="Han Y."/>
            <person name="Dong L."/>
            <person name="Ji J."/>
            <person name="Chen P."/>
            <person name="Wu S."/>
            <person name="Liu J."/>
            <person name="Xiao Y."/>
            <person name="Bu D."/>
            <person name="Tan J."/>
            <person name="Yang L."/>
            <person name="Ye C."/>
            <person name="Zhang J."/>
            <person name="Xu J."/>
            <person name="Zhou Y."/>
            <person name="Yu Y."/>
            <person name="Zhang B."/>
            <person name="Zhuang S."/>
            <person name="Wei H."/>
            <person name="Liu B."/>
            <person name="Lei M."/>
            <person name="Yu H."/>
            <person name="Li Y."/>
            <person name="Xu H."/>
            <person name="Wei S."/>
            <person name="He X."/>
            <person name="Fang L."/>
            <person name="Zhang Z."/>
            <person name="Zhang Y."/>
            <person name="Huang X."/>
            <person name="Su Z."/>
            <person name="Tong W."/>
            <person name="Li J."/>
            <person name="Tong Z."/>
            <person name="Li S."/>
            <person name="Ye J."/>
            <person name="Wang L."/>
            <person name="Fang L."/>
            <person name="Lei T."/>
            <person name="Chen C.-S."/>
            <person name="Chen H.-C."/>
            <person name="Xu Z."/>
            <person name="Li H."/>
            <person name="Huang H."/>
            <person name="Zhang F."/>
            <person name="Xu H."/>
            <person name="Li N."/>
            <person name="Zhao C."/>
            <person name="Li S."/>
            <person name="Dong L."/>
            <person name="Huang Y."/>
            <person name="Li L."/>
            <person name="Xi Y."/>
            <person name="Qi Q."/>
            <person name="Li W."/>
            <person name="Zhang B."/>
            <person name="Hu W."/>
            <person name="Zhang Y."/>
            <person name="Tian X."/>
            <person name="Jiao Y."/>
            <person name="Liang X."/>
            <person name="Jin J."/>
            <person name="Gao L."/>
            <person name="Zheng W."/>
            <person name="Hao B."/>
            <person name="Liu S.-M."/>
            <person name="Wang W."/>
            <person name="Yuan L."/>
            <person name="Cao M."/>
            <person name="McDermott J."/>
            <person name="Samudrala R."/>
            <person name="Wang J."/>
            <person name="Wong G.K.-S."/>
            <person name="Yang H."/>
        </authorList>
    </citation>
    <scope>NUCLEOTIDE SEQUENCE [LARGE SCALE GENOMIC DNA]</scope>
    <source>
        <strain>cv. Nipponbare</strain>
    </source>
</reference>
<reference key="7">
    <citation type="journal article" date="2003" name="Science">
        <title>Collection, mapping, and annotation of over 28,000 cDNA clones from japonica rice.</title>
        <authorList>
            <consortium name="The rice full-length cDNA consortium"/>
        </authorList>
    </citation>
    <scope>NUCLEOTIDE SEQUENCE [LARGE SCALE MRNA]</scope>
    <source>
        <strain>cv. Nipponbare</strain>
    </source>
</reference>
<organism>
    <name type="scientific">Oryza sativa subsp. japonica</name>
    <name type="common">Rice</name>
    <dbReference type="NCBI Taxonomy" id="39947"/>
    <lineage>
        <taxon>Eukaryota</taxon>
        <taxon>Viridiplantae</taxon>
        <taxon>Streptophyta</taxon>
        <taxon>Embryophyta</taxon>
        <taxon>Tracheophyta</taxon>
        <taxon>Spermatophyta</taxon>
        <taxon>Magnoliopsida</taxon>
        <taxon>Liliopsida</taxon>
        <taxon>Poales</taxon>
        <taxon>Poaceae</taxon>
        <taxon>BOP clade</taxon>
        <taxon>Oryzoideae</taxon>
        <taxon>Oryzeae</taxon>
        <taxon>Oryzinae</taxon>
        <taxon>Oryza</taxon>
        <taxon>Oryza sativa</taxon>
    </lineage>
</organism>
<keyword id="KW-0158">Chromosome</keyword>
<keyword id="KW-0227">DNA damage</keyword>
<keyword id="KW-0234">DNA repair</keyword>
<keyword id="KW-0235">DNA replication</keyword>
<keyword id="KW-0238">DNA-binding</keyword>
<keyword id="KW-0539">Nucleus</keyword>
<keyword id="KW-1185">Reference proteome</keyword>
<keyword id="KW-0804">Transcription</keyword>
<keyword id="KW-0805">Transcription regulation</keyword>
<accession>Q9LGR0</accession>
<accession>Q0JQ27</accession>
<accession>Q8LKS8</accession>
<dbReference type="EMBL" id="AF503585">
    <property type="protein sequence ID" value="AAM46895.1"/>
    <property type="molecule type" value="mRNA"/>
</dbReference>
<dbReference type="EMBL" id="AP002486">
    <property type="protein sequence ID" value="BAB03358.1"/>
    <property type="molecule type" value="Genomic_DNA"/>
</dbReference>
<dbReference type="EMBL" id="AP008207">
    <property type="protein sequence ID" value="BAF04151.1"/>
    <property type="molecule type" value="Genomic_DNA"/>
</dbReference>
<dbReference type="EMBL" id="AP014957">
    <property type="protein sequence ID" value="BAS70769.1"/>
    <property type="molecule type" value="Genomic_DNA"/>
</dbReference>
<dbReference type="EMBL" id="CM000138">
    <property type="protein sequence ID" value="EEE54009.1"/>
    <property type="molecule type" value="Genomic_DNA"/>
</dbReference>
<dbReference type="EMBL" id="AK066832">
    <property type="protein sequence ID" value="BAG90145.1"/>
    <property type="molecule type" value="mRNA"/>
</dbReference>
<dbReference type="RefSeq" id="XP_015617055.1">
    <property type="nucleotide sequence ID" value="XM_015761569.1"/>
</dbReference>
<dbReference type="SMR" id="Q9LGR0"/>
<dbReference type="FunCoup" id="Q9LGR0">
    <property type="interactions" value="3367"/>
</dbReference>
<dbReference type="STRING" id="39947.Q9LGR0"/>
<dbReference type="PaxDb" id="39947-Q9LGR0"/>
<dbReference type="EnsemblPlants" id="Os01t0184900-01">
    <property type="protein sequence ID" value="Os01t0184900-01"/>
    <property type="gene ID" value="Os01g0184900"/>
</dbReference>
<dbReference type="EnsemblPlants" id="Os01t0184900-02">
    <property type="protein sequence ID" value="Os01t0184900-02"/>
    <property type="gene ID" value="Os01g0184900"/>
</dbReference>
<dbReference type="Gramene" id="Os01t0184900-01">
    <property type="protein sequence ID" value="Os01t0184900-01"/>
    <property type="gene ID" value="Os01g0184900"/>
</dbReference>
<dbReference type="Gramene" id="Os01t0184900-02">
    <property type="protein sequence ID" value="Os01t0184900-02"/>
    <property type="gene ID" value="Os01g0184900"/>
</dbReference>
<dbReference type="KEGG" id="dosa:Os01g0184900"/>
<dbReference type="eggNOG" id="KOG0526">
    <property type="taxonomic scope" value="Eukaryota"/>
</dbReference>
<dbReference type="HOGENOM" id="CLU_017374_2_2_1"/>
<dbReference type="InParanoid" id="Q9LGR0"/>
<dbReference type="OMA" id="QVVTKIF"/>
<dbReference type="OrthoDB" id="498543at2759"/>
<dbReference type="Proteomes" id="UP000000763">
    <property type="component" value="Chromosome 1"/>
</dbReference>
<dbReference type="Proteomes" id="UP000007752">
    <property type="component" value="Chromosome 1"/>
</dbReference>
<dbReference type="Proteomes" id="UP000059680">
    <property type="component" value="Chromosome 1"/>
</dbReference>
<dbReference type="GO" id="GO:0035101">
    <property type="term" value="C:FACT complex"/>
    <property type="evidence" value="ECO:0000318"/>
    <property type="project" value="GO_Central"/>
</dbReference>
<dbReference type="GO" id="GO:0003677">
    <property type="term" value="F:DNA binding"/>
    <property type="evidence" value="ECO:0007669"/>
    <property type="project" value="UniProtKB-KW"/>
</dbReference>
<dbReference type="GO" id="GO:0042393">
    <property type="term" value="F:histone binding"/>
    <property type="evidence" value="ECO:0000318"/>
    <property type="project" value="GO_Central"/>
</dbReference>
<dbReference type="GO" id="GO:0031491">
    <property type="term" value="F:nucleosome binding"/>
    <property type="evidence" value="ECO:0000318"/>
    <property type="project" value="GO_Central"/>
</dbReference>
<dbReference type="GO" id="GO:0006281">
    <property type="term" value="P:DNA repair"/>
    <property type="evidence" value="ECO:0007669"/>
    <property type="project" value="UniProtKB-KW"/>
</dbReference>
<dbReference type="GO" id="GO:0006260">
    <property type="term" value="P:DNA replication"/>
    <property type="evidence" value="ECO:0007669"/>
    <property type="project" value="UniProtKB-KW"/>
</dbReference>
<dbReference type="CDD" id="cd00084">
    <property type="entry name" value="HMG-box_SF"/>
    <property type="match status" value="1"/>
</dbReference>
<dbReference type="CDD" id="cd13230">
    <property type="entry name" value="PH1_SSRP1-like"/>
    <property type="match status" value="1"/>
</dbReference>
<dbReference type="CDD" id="cd13231">
    <property type="entry name" value="PH2_SSRP1-like"/>
    <property type="match status" value="1"/>
</dbReference>
<dbReference type="FunFam" id="1.10.30.10:FF:000016">
    <property type="entry name" value="FACT complex subunit SSRP1"/>
    <property type="match status" value="1"/>
</dbReference>
<dbReference type="FunFam" id="2.30.29.220:FF:000002">
    <property type="entry name" value="FACT complex subunit SSRP1"/>
    <property type="match status" value="1"/>
</dbReference>
<dbReference type="FunFam" id="2.30.29.30:FF:000214">
    <property type="entry name" value="FACT complex subunit SSRP1"/>
    <property type="match status" value="1"/>
</dbReference>
<dbReference type="FunFam" id="2.30.29.30:FF:000298">
    <property type="entry name" value="FACT complex subunit SSRP1"/>
    <property type="match status" value="1"/>
</dbReference>
<dbReference type="FunFam" id="2.30.29.150:FF:000001">
    <property type="entry name" value="Fact complex subunit ssrp1"/>
    <property type="match status" value="1"/>
</dbReference>
<dbReference type="Gene3D" id="2.30.29.150">
    <property type="match status" value="1"/>
</dbReference>
<dbReference type="Gene3D" id="1.10.30.10">
    <property type="entry name" value="High mobility group box domain"/>
    <property type="match status" value="1"/>
</dbReference>
<dbReference type="Gene3D" id="2.30.29.30">
    <property type="entry name" value="Pleckstrin-homology domain (PH domain)/Phosphotyrosine-binding domain (PTB)"/>
    <property type="match status" value="2"/>
</dbReference>
<dbReference type="Gene3D" id="2.30.29.220">
    <property type="entry name" value="Structure-specific recognition protein (SSRP1)"/>
    <property type="match status" value="1"/>
</dbReference>
<dbReference type="InterPro" id="IPR009071">
    <property type="entry name" value="HMG_box_dom"/>
</dbReference>
<dbReference type="InterPro" id="IPR036910">
    <property type="entry name" value="HMG_box_dom_sf"/>
</dbReference>
<dbReference type="InterPro" id="IPR011993">
    <property type="entry name" value="PH-like_dom_sf"/>
</dbReference>
<dbReference type="InterPro" id="IPR013719">
    <property type="entry name" value="RTT106/SPT16-like_middle_dom"/>
</dbReference>
<dbReference type="InterPro" id="IPR050454">
    <property type="entry name" value="RTT106/SSRP1_HistChap/FACT"/>
</dbReference>
<dbReference type="InterPro" id="IPR048993">
    <property type="entry name" value="SSRP1-like_PH1"/>
</dbReference>
<dbReference type="InterPro" id="IPR000969">
    <property type="entry name" value="SSRP1/POB3"/>
</dbReference>
<dbReference type="InterPro" id="IPR035417">
    <property type="entry name" value="SSRP1/POB3_N"/>
</dbReference>
<dbReference type="InterPro" id="IPR024954">
    <property type="entry name" value="SSRP1_DD"/>
</dbReference>
<dbReference type="InterPro" id="IPR038167">
    <property type="entry name" value="SSRP1_sf"/>
</dbReference>
<dbReference type="PANTHER" id="PTHR45849">
    <property type="entry name" value="FACT COMPLEX SUBUNIT SSRP1"/>
    <property type="match status" value="1"/>
</dbReference>
<dbReference type="PANTHER" id="PTHR45849:SF1">
    <property type="entry name" value="FACT COMPLEX SUBUNIT SSRP1"/>
    <property type="match status" value="1"/>
</dbReference>
<dbReference type="Pfam" id="PF00505">
    <property type="entry name" value="HMG_box"/>
    <property type="match status" value="1"/>
</dbReference>
<dbReference type="Pfam" id="PF21103">
    <property type="entry name" value="PH1_SSRP1-like"/>
    <property type="match status" value="1"/>
</dbReference>
<dbReference type="Pfam" id="PF17292">
    <property type="entry name" value="POB3_N"/>
    <property type="match status" value="1"/>
</dbReference>
<dbReference type="Pfam" id="PF08512">
    <property type="entry name" value="Rttp106-like_middle"/>
    <property type="match status" value="1"/>
</dbReference>
<dbReference type="Pfam" id="PF03531">
    <property type="entry name" value="SSrecog"/>
    <property type="match status" value="1"/>
</dbReference>
<dbReference type="PRINTS" id="PR00887">
    <property type="entry name" value="SSRCOGNITION"/>
</dbReference>
<dbReference type="SMART" id="SM00398">
    <property type="entry name" value="HMG"/>
    <property type="match status" value="1"/>
</dbReference>
<dbReference type="SMART" id="SM01287">
    <property type="entry name" value="Rtt106"/>
    <property type="match status" value="1"/>
</dbReference>
<dbReference type="SUPFAM" id="SSF47095">
    <property type="entry name" value="HMG-box"/>
    <property type="match status" value="1"/>
</dbReference>
<dbReference type="SUPFAM" id="SSF50729">
    <property type="entry name" value="PH domain-like"/>
    <property type="match status" value="1"/>
</dbReference>
<dbReference type="PROSITE" id="PS50118">
    <property type="entry name" value="HMG_BOX_2"/>
    <property type="match status" value="1"/>
</dbReference>
<sequence>MTDGHLFNNILLGGRAGSNPGQFKVYSGGLAWKRQGGGKTIEIEKSDLTSVTWMKVPRAYQLGVRTKDGLFYKFIGFREQDVSSLTNFMQKNMGLSPDEKQLSVSGQNWGGIDINGNMLTFMVGSKQAFEVSLADVSQTQMQGKTDVLLEFHVDDTTGGNEKDSLMDLSFHVPTSNTQFLGDENRTAAQVLWETIMGVADVDSSEEAVVTFEGIAILTPRGRYSVELHLSFLRLQGQANDFKIQYSSIVRLFLLPKSNNPHTFVVVTLDPPIRKGQTLYPHIVIQFETEAVVERNLALTKEVLAEKYKDRLEESYKGLIHEVFTKVLRGLSGAKVTRPGSFRSCQDGYAVKSSLKAEDGLLYPLEKGFFFLPKPPTLILHEEIEFVEFERHGAGGASISSHYFDLLVKLKNDQEHLFRNIQRSEYHNLFNFINGKHLKIMNLGDGQGATGGVTAVLRDTDDDAVDPHLERIKNQAGDEESDEEDEDFVADKDDSGSPTDDSGGEDSDASESGGEKEKLSKKEASSSKPPVKRKPKGRDEEGSDKRKPKKKKDPNAPKRAMTPFMYFSMAERGNMKNNNPDLPTTEIAKKLGEMWQKMTGEEKQPYIQQSQVDKKRYEKESAVYRGAAAMDVDSGSGGNESD</sequence>
<feature type="chain" id="PRO_0000245196" description="FACT complex subunit SSRP1-A">
    <location>
        <begin position="1"/>
        <end position="641"/>
    </location>
</feature>
<feature type="DNA-binding region" description="HMG box" evidence="2">
    <location>
        <begin position="556"/>
        <end position="624"/>
    </location>
</feature>
<feature type="region of interest" description="Disordered" evidence="3">
    <location>
        <begin position="459"/>
        <end position="561"/>
    </location>
</feature>
<feature type="compositionally biased region" description="Acidic residues" evidence="3">
    <location>
        <begin position="476"/>
        <end position="487"/>
    </location>
</feature>
<feature type="compositionally biased region" description="Basic and acidic residues" evidence="3">
    <location>
        <begin position="512"/>
        <end position="524"/>
    </location>
</feature>
<feature type="sequence conflict" description="In Ref. 1; AAM46895." evidence="4" ref="1">
    <original>D</original>
    <variation>E</variation>
    <location>
        <position position="543"/>
    </location>
</feature>
<proteinExistence type="evidence at transcript level"/>
<comment type="function">
    <text evidence="1">Component of the FACT complex, a general chromatin factor that acts to reorganize nucleosomes. The FACT complex is involved in multiple processes that require DNA as a template such as mRNA elongation, DNA replication and DNA repair. During transcription elongation the FACT complex acts as a histone chaperone that both destabilizes and restores nucleosomal structure. It facilitates the passage of RNA polymerase II and transcription by promoting the dissociation of one histone H2A-H2B dimer from the nucleosome, then subsequently promotes the reestablishment of the nucleosome following the passage of RNA polymerase II. Binds specifically to double-stranded DNA (By similarity).</text>
</comment>
<comment type="subunit">
    <text evidence="1">Component of the FACT complex, a stable heterodimer of SPT16 and SSRP1.</text>
</comment>
<comment type="subcellular location">
    <subcellularLocation>
        <location evidence="2">Nucleus</location>
    </subcellularLocation>
    <subcellularLocation>
        <location evidence="1">Chromosome</location>
    </subcellularLocation>
</comment>
<comment type="similarity">
    <text evidence="4">Belongs to the SSRP1 family.</text>
</comment>
<protein>
    <recommendedName>
        <fullName>FACT complex subunit SSRP1-A</fullName>
    </recommendedName>
    <alternativeName>
        <fullName>Early drought-induced protein R1G1A</fullName>
    </alternativeName>
    <alternativeName>
        <fullName>Facilitates chromatin transcription complex subunit SSRP1-A</fullName>
    </alternativeName>
    <alternativeName>
        <fullName>Recombination signal sequence recognition protein 1-A</fullName>
    </alternativeName>
</protein>
<name>SSP1A_ORYSJ</name>
<gene>
    <name type="primary">SSRP1-A</name>
    <name type="synonym">R1G1A</name>
    <name type="ordered locus">Os01g0184900</name>
    <name type="ordered locus">LOC_Os01g08970</name>
    <name evidence="5" type="ORF">OsJ_00664</name>
    <name type="ORF">P0510F03.10</name>
</gene>